<sequence>MRFVLPKGRLYQDSIKVLELAGIKVPKRDERALIWGDGNNEFLLARAFDVPVYVEHGIDIGIAGSDVVEERGSDVFIPLELPFGKCRLSIAVPKEKVVDPENMDGYKIATKYPNITKRYFENLNIEVEVIKLHGSIELAPRIGIADAIVDIVETGNTLRSNGLVEVAKIMDVSALLLVNRISQKMFFEEINSFITKIRRSVYGH</sequence>
<gene>
    <name type="primary">hisG</name>
    <name type="ordered locus">PF1658</name>
</gene>
<feature type="chain" id="PRO_0000151949" description="ATP phosphoribosyltransferase">
    <location>
        <begin position="1"/>
        <end position="204"/>
    </location>
</feature>
<reference key="1">
    <citation type="journal article" date="1999" name="Genetics">
        <title>Divergence of the hyperthermophilic archaea Pyrococcus furiosus and P. horikoshii inferred from complete genomic sequences.</title>
        <authorList>
            <person name="Maeder D.L."/>
            <person name="Weiss R.B."/>
            <person name="Dunn D.M."/>
            <person name="Cherry J.L."/>
            <person name="Gonzalez J.M."/>
            <person name="DiRuggiero J."/>
            <person name="Robb F.T."/>
        </authorList>
    </citation>
    <scope>NUCLEOTIDE SEQUENCE [LARGE SCALE GENOMIC DNA]</scope>
    <source>
        <strain>ATCC 43587 / DSM 3638 / JCM 8422 / Vc1</strain>
    </source>
</reference>
<organism>
    <name type="scientific">Pyrococcus furiosus (strain ATCC 43587 / DSM 3638 / JCM 8422 / Vc1)</name>
    <dbReference type="NCBI Taxonomy" id="186497"/>
    <lineage>
        <taxon>Archaea</taxon>
        <taxon>Methanobacteriati</taxon>
        <taxon>Methanobacteriota</taxon>
        <taxon>Thermococci</taxon>
        <taxon>Thermococcales</taxon>
        <taxon>Thermococcaceae</taxon>
        <taxon>Pyrococcus</taxon>
    </lineage>
</organism>
<evidence type="ECO:0000250" key="1"/>
<evidence type="ECO:0000305" key="2"/>
<name>HIS1_PYRFU</name>
<dbReference type="EC" id="2.4.2.17"/>
<dbReference type="EMBL" id="AE009950">
    <property type="protein sequence ID" value="AAL81782.1"/>
    <property type="molecule type" value="Genomic_DNA"/>
</dbReference>
<dbReference type="RefSeq" id="WP_011012804.1">
    <property type="nucleotide sequence ID" value="NZ_CP023154.1"/>
</dbReference>
<dbReference type="SMR" id="Q8U0D4"/>
<dbReference type="STRING" id="186497.PF1658"/>
<dbReference type="PaxDb" id="186497-PF1658"/>
<dbReference type="GeneID" id="41713486"/>
<dbReference type="KEGG" id="pfu:PF1658"/>
<dbReference type="PATRIC" id="fig|186497.12.peg.1724"/>
<dbReference type="eggNOG" id="arCOG02208">
    <property type="taxonomic scope" value="Archaea"/>
</dbReference>
<dbReference type="HOGENOM" id="CLU_038115_2_0_2"/>
<dbReference type="OrthoDB" id="33116at2157"/>
<dbReference type="PhylomeDB" id="Q8U0D4"/>
<dbReference type="UniPathway" id="UPA00031">
    <property type="reaction ID" value="UER00006"/>
</dbReference>
<dbReference type="Proteomes" id="UP000001013">
    <property type="component" value="Chromosome"/>
</dbReference>
<dbReference type="GO" id="GO:0005737">
    <property type="term" value="C:cytoplasm"/>
    <property type="evidence" value="ECO:0007669"/>
    <property type="project" value="UniProtKB-SubCell"/>
</dbReference>
<dbReference type="GO" id="GO:0005524">
    <property type="term" value="F:ATP binding"/>
    <property type="evidence" value="ECO:0007669"/>
    <property type="project" value="UniProtKB-KW"/>
</dbReference>
<dbReference type="GO" id="GO:0003879">
    <property type="term" value="F:ATP phosphoribosyltransferase activity"/>
    <property type="evidence" value="ECO:0007669"/>
    <property type="project" value="UniProtKB-UniRule"/>
</dbReference>
<dbReference type="GO" id="GO:0000105">
    <property type="term" value="P:L-histidine biosynthetic process"/>
    <property type="evidence" value="ECO:0007669"/>
    <property type="project" value="UniProtKB-UniRule"/>
</dbReference>
<dbReference type="CDD" id="cd13595">
    <property type="entry name" value="PBP2_HisGs"/>
    <property type="match status" value="1"/>
</dbReference>
<dbReference type="FunFam" id="3.40.190.10:FF:000008">
    <property type="entry name" value="ATP phosphoribosyltransferase"/>
    <property type="match status" value="1"/>
</dbReference>
<dbReference type="Gene3D" id="3.40.190.10">
    <property type="entry name" value="Periplasmic binding protein-like II"/>
    <property type="match status" value="2"/>
</dbReference>
<dbReference type="HAMAP" id="MF_01018">
    <property type="entry name" value="HisG_Short"/>
    <property type="match status" value="1"/>
</dbReference>
<dbReference type="InterPro" id="IPR013820">
    <property type="entry name" value="ATP_PRibTrfase_cat"/>
</dbReference>
<dbReference type="InterPro" id="IPR018198">
    <property type="entry name" value="ATP_PRibTrfase_CS"/>
</dbReference>
<dbReference type="InterPro" id="IPR001348">
    <property type="entry name" value="ATP_PRibTrfase_HisG"/>
</dbReference>
<dbReference type="InterPro" id="IPR024893">
    <property type="entry name" value="ATP_PRibTrfase_HisG_short"/>
</dbReference>
<dbReference type="NCBIfam" id="TIGR00070">
    <property type="entry name" value="hisG"/>
    <property type="match status" value="1"/>
</dbReference>
<dbReference type="PANTHER" id="PTHR21403:SF10">
    <property type="entry name" value="ATP PHOSPHORIBOSYLTRANSFERASE"/>
    <property type="match status" value="1"/>
</dbReference>
<dbReference type="PANTHER" id="PTHR21403">
    <property type="entry name" value="ATP PHOSPHORIBOSYLTRANSFERASE ATP-PRTASE"/>
    <property type="match status" value="1"/>
</dbReference>
<dbReference type="Pfam" id="PF01634">
    <property type="entry name" value="HisG"/>
    <property type="match status" value="1"/>
</dbReference>
<dbReference type="SUPFAM" id="SSF53850">
    <property type="entry name" value="Periplasmic binding protein-like II"/>
    <property type="match status" value="1"/>
</dbReference>
<dbReference type="PROSITE" id="PS01316">
    <property type="entry name" value="ATP_P_PHORIBOSYLTR"/>
    <property type="match status" value="1"/>
</dbReference>
<proteinExistence type="inferred from homology"/>
<protein>
    <recommendedName>
        <fullName>ATP phosphoribosyltransferase</fullName>
        <shortName>ATP-PRT</shortName>
        <shortName>ATP-PRTase</shortName>
        <ecNumber>2.4.2.17</ecNumber>
    </recommendedName>
</protein>
<comment type="function">
    <text evidence="1">Catalyzes the condensation of ATP and 5-phosphoribose 1-diphosphate to form N'-(5'-phosphoribosyl)-ATP (PR-ATP). Has a crucial role in the pathway because the rate of histidine biosynthesis seems to be controlled primarily by regulation of HisG enzymatic activity (By similarity).</text>
</comment>
<comment type="catalytic activity">
    <reaction>
        <text>1-(5-phospho-beta-D-ribosyl)-ATP + diphosphate = 5-phospho-alpha-D-ribose 1-diphosphate + ATP</text>
        <dbReference type="Rhea" id="RHEA:18473"/>
        <dbReference type="ChEBI" id="CHEBI:30616"/>
        <dbReference type="ChEBI" id="CHEBI:33019"/>
        <dbReference type="ChEBI" id="CHEBI:58017"/>
        <dbReference type="ChEBI" id="CHEBI:73183"/>
        <dbReference type="EC" id="2.4.2.17"/>
    </reaction>
</comment>
<comment type="pathway">
    <text>Amino-acid biosynthesis; L-histidine biosynthesis; L-histidine from 5-phospho-alpha-D-ribose 1-diphosphate: step 1/9.</text>
</comment>
<comment type="subcellular location">
    <subcellularLocation>
        <location evidence="1">Cytoplasm</location>
    </subcellularLocation>
</comment>
<comment type="similarity">
    <text evidence="2">Belongs to the ATP phosphoribosyltransferase family. Short subfamily.</text>
</comment>
<keyword id="KW-0028">Amino-acid biosynthesis</keyword>
<keyword id="KW-0067">ATP-binding</keyword>
<keyword id="KW-0963">Cytoplasm</keyword>
<keyword id="KW-0328">Glycosyltransferase</keyword>
<keyword id="KW-0368">Histidine biosynthesis</keyword>
<keyword id="KW-0547">Nucleotide-binding</keyword>
<keyword id="KW-1185">Reference proteome</keyword>
<keyword id="KW-0808">Transferase</keyword>
<accession>Q8U0D4</accession>